<dbReference type="EC" id="4.3.3.7" evidence="1"/>
<dbReference type="EMBL" id="CP001196">
    <property type="protein sequence ID" value="ACI92955.1"/>
    <property type="molecule type" value="Genomic_DNA"/>
</dbReference>
<dbReference type="EMBL" id="CP002826">
    <property type="protein sequence ID" value="AEI06889.1"/>
    <property type="status" value="ALT_INIT"/>
    <property type="molecule type" value="Genomic_DNA"/>
</dbReference>
<dbReference type="RefSeq" id="WP_012562982.1">
    <property type="nucleotide sequence ID" value="NC_015684.1"/>
</dbReference>
<dbReference type="SMR" id="B6JGA4"/>
<dbReference type="STRING" id="504832.OCA5_c21860"/>
<dbReference type="KEGG" id="oca:OCAR_5830"/>
<dbReference type="KEGG" id="ocg:OCA5_c21860"/>
<dbReference type="PATRIC" id="fig|504832.7.peg.2308"/>
<dbReference type="eggNOG" id="COG0329">
    <property type="taxonomic scope" value="Bacteria"/>
</dbReference>
<dbReference type="HOGENOM" id="CLU_049343_7_0_5"/>
<dbReference type="OrthoDB" id="9782828at2"/>
<dbReference type="UniPathway" id="UPA00034">
    <property type="reaction ID" value="UER00017"/>
</dbReference>
<dbReference type="Proteomes" id="UP000007730">
    <property type="component" value="Chromosome"/>
</dbReference>
<dbReference type="GO" id="GO:0005829">
    <property type="term" value="C:cytosol"/>
    <property type="evidence" value="ECO:0007669"/>
    <property type="project" value="TreeGrafter"/>
</dbReference>
<dbReference type="GO" id="GO:0008840">
    <property type="term" value="F:4-hydroxy-tetrahydrodipicolinate synthase activity"/>
    <property type="evidence" value="ECO:0007669"/>
    <property type="project" value="UniProtKB-UniRule"/>
</dbReference>
<dbReference type="GO" id="GO:0019877">
    <property type="term" value="P:diaminopimelate biosynthetic process"/>
    <property type="evidence" value="ECO:0007669"/>
    <property type="project" value="UniProtKB-UniRule"/>
</dbReference>
<dbReference type="GO" id="GO:0009089">
    <property type="term" value="P:lysine biosynthetic process via diaminopimelate"/>
    <property type="evidence" value="ECO:0007669"/>
    <property type="project" value="UniProtKB-UniRule"/>
</dbReference>
<dbReference type="CDD" id="cd00950">
    <property type="entry name" value="DHDPS"/>
    <property type="match status" value="1"/>
</dbReference>
<dbReference type="Gene3D" id="3.20.20.70">
    <property type="entry name" value="Aldolase class I"/>
    <property type="match status" value="1"/>
</dbReference>
<dbReference type="HAMAP" id="MF_00418">
    <property type="entry name" value="DapA"/>
    <property type="match status" value="1"/>
</dbReference>
<dbReference type="InterPro" id="IPR013785">
    <property type="entry name" value="Aldolase_TIM"/>
</dbReference>
<dbReference type="InterPro" id="IPR005263">
    <property type="entry name" value="DapA"/>
</dbReference>
<dbReference type="InterPro" id="IPR002220">
    <property type="entry name" value="DapA-like"/>
</dbReference>
<dbReference type="InterPro" id="IPR020625">
    <property type="entry name" value="Schiff_base-form_aldolases_AS"/>
</dbReference>
<dbReference type="InterPro" id="IPR020624">
    <property type="entry name" value="Schiff_base-form_aldolases_CS"/>
</dbReference>
<dbReference type="NCBIfam" id="TIGR00674">
    <property type="entry name" value="dapA"/>
    <property type="match status" value="1"/>
</dbReference>
<dbReference type="PANTHER" id="PTHR12128:SF66">
    <property type="entry name" value="4-HYDROXY-2-OXOGLUTARATE ALDOLASE, MITOCHONDRIAL"/>
    <property type="match status" value="1"/>
</dbReference>
<dbReference type="PANTHER" id="PTHR12128">
    <property type="entry name" value="DIHYDRODIPICOLINATE SYNTHASE"/>
    <property type="match status" value="1"/>
</dbReference>
<dbReference type="Pfam" id="PF00701">
    <property type="entry name" value="DHDPS"/>
    <property type="match status" value="1"/>
</dbReference>
<dbReference type="PIRSF" id="PIRSF001365">
    <property type="entry name" value="DHDPS"/>
    <property type="match status" value="1"/>
</dbReference>
<dbReference type="PRINTS" id="PR00146">
    <property type="entry name" value="DHPICSNTHASE"/>
</dbReference>
<dbReference type="SMART" id="SM01130">
    <property type="entry name" value="DHDPS"/>
    <property type="match status" value="1"/>
</dbReference>
<dbReference type="SUPFAM" id="SSF51569">
    <property type="entry name" value="Aldolase"/>
    <property type="match status" value="1"/>
</dbReference>
<dbReference type="PROSITE" id="PS00665">
    <property type="entry name" value="DHDPS_1"/>
    <property type="match status" value="1"/>
</dbReference>
<dbReference type="PROSITE" id="PS00666">
    <property type="entry name" value="DHDPS_2"/>
    <property type="match status" value="1"/>
</dbReference>
<name>DAPA_AFIC5</name>
<accession>B6JGA4</accession>
<accession>F8BXQ2</accession>
<feature type="chain" id="PRO_1000124054" description="4-hydroxy-tetrahydrodipicolinate synthase">
    <location>
        <begin position="1"/>
        <end position="296"/>
    </location>
</feature>
<feature type="active site" description="Proton donor/acceptor" evidence="1">
    <location>
        <position position="137"/>
    </location>
</feature>
<feature type="active site" description="Schiff-base intermediate with substrate" evidence="1">
    <location>
        <position position="165"/>
    </location>
</feature>
<feature type="binding site" evidence="1">
    <location>
        <position position="49"/>
    </location>
    <ligand>
        <name>pyruvate</name>
        <dbReference type="ChEBI" id="CHEBI:15361"/>
    </ligand>
</feature>
<feature type="binding site" evidence="1">
    <location>
        <position position="207"/>
    </location>
    <ligand>
        <name>pyruvate</name>
        <dbReference type="ChEBI" id="CHEBI:15361"/>
    </ligand>
</feature>
<feature type="site" description="Part of a proton relay during catalysis" evidence="1">
    <location>
        <position position="48"/>
    </location>
</feature>
<feature type="site" description="Part of a proton relay during catalysis" evidence="1">
    <location>
        <position position="111"/>
    </location>
</feature>
<evidence type="ECO:0000255" key="1">
    <source>
        <dbReference type="HAMAP-Rule" id="MF_00418"/>
    </source>
</evidence>
<evidence type="ECO:0000305" key="2"/>
<comment type="function">
    <text evidence="1">Catalyzes the condensation of (S)-aspartate-beta-semialdehyde [(S)-ASA] and pyruvate to 4-hydroxy-tetrahydrodipicolinate (HTPA).</text>
</comment>
<comment type="catalytic activity">
    <reaction evidence="1">
        <text>L-aspartate 4-semialdehyde + pyruvate = (2S,4S)-4-hydroxy-2,3,4,5-tetrahydrodipicolinate + H2O + H(+)</text>
        <dbReference type="Rhea" id="RHEA:34171"/>
        <dbReference type="ChEBI" id="CHEBI:15361"/>
        <dbReference type="ChEBI" id="CHEBI:15377"/>
        <dbReference type="ChEBI" id="CHEBI:15378"/>
        <dbReference type="ChEBI" id="CHEBI:67139"/>
        <dbReference type="ChEBI" id="CHEBI:537519"/>
        <dbReference type="EC" id="4.3.3.7"/>
    </reaction>
</comment>
<comment type="pathway">
    <text evidence="1">Amino-acid biosynthesis; L-lysine biosynthesis via DAP pathway; (S)-tetrahydrodipicolinate from L-aspartate: step 3/4.</text>
</comment>
<comment type="subunit">
    <text evidence="1">Homotetramer; dimer of dimers.</text>
</comment>
<comment type="subcellular location">
    <subcellularLocation>
        <location evidence="1">Cytoplasm</location>
    </subcellularLocation>
</comment>
<comment type="similarity">
    <text evidence="1">Belongs to the DapA family.</text>
</comment>
<comment type="caution">
    <text evidence="2">Was originally thought to be a dihydrodipicolinate synthase (DHDPS), catalyzing the condensation of (S)-aspartate-beta-semialdehyde [(S)-ASA] and pyruvate to dihydrodipicolinate (DHDP). However, it was shown in E.coli that the product of the enzymatic reaction is not dihydrodipicolinate but in fact (4S)-4-hydroxy-2,3,4,5-tetrahydro-(2S)-dipicolinic acid (HTPA), and that the consecutive dehydration reaction leading to DHDP is not spontaneous but catalyzed by DapB.</text>
</comment>
<comment type="sequence caution" evidence="2">
    <conflict type="erroneous initiation">
        <sequence resource="EMBL-CDS" id="AEI06889"/>
    </conflict>
    <text>Extended N-terminus.</text>
</comment>
<reference key="1">
    <citation type="journal article" date="2008" name="J. Bacteriol.">
        <title>Genome sequence of the chemolithoautotrophic bacterium Oligotropha carboxidovorans OM5T.</title>
        <authorList>
            <person name="Paul D."/>
            <person name="Bridges S."/>
            <person name="Burgess S.C."/>
            <person name="Dandass Y."/>
            <person name="Lawrence M.L."/>
        </authorList>
    </citation>
    <scope>NUCLEOTIDE SEQUENCE [LARGE SCALE GENOMIC DNA]</scope>
    <source>
        <strain>ATCC 49405 / DSM 1227 / KCTC 32145 / OM5</strain>
    </source>
</reference>
<reference key="2">
    <citation type="journal article" date="2011" name="J. Bacteriol.">
        <title>Complete genome sequences of the chemolithoautotrophic Oligotropha carboxidovorans strains OM4 and OM5.</title>
        <authorList>
            <person name="Volland S."/>
            <person name="Rachinger M."/>
            <person name="Strittmatter A."/>
            <person name="Daniel R."/>
            <person name="Gottschalk G."/>
            <person name="Meyer O."/>
        </authorList>
    </citation>
    <scope>NUCLEOTIDE SEQUENCE [LARGE SCALE GENOMIC DNA]</scope>
    <source>
        <strain>ATCC 49405 / DSM 1227 / KCTC 32145 / OM5</strain>
    </source>
</reference>
<proteinExistence type="inferred from homology"/>
<keyword id="KW-0028">Amino-acid biosynthesis</keyword>
<keyword id="KW-0963">Cytoplasm</keyword>
<keyword id="KW-0220">Diaminopimelate biosynthesis</keyword>
<keyword id="KW-0456">Lyase</keyword>
<keyword id="KW-0457">Lysine biosynthesis</keyword>
<keyword id="KW-1185">Reference proteome</keyword>
<keyword id="KW-0704">Schiff base</keyword>
<protein>
    <recommendedName>
        <fullName evidence="1">4-hydroxy-tetrahydrodipicolinate synthase</fullName>
        <shortName evidence="1">HTPA synthase</shortName>
        <ecNumber evidence="1">4.3.3.7</ecNumber>
    </recommendedName>
</protein>
<organism>
    <name type="scientific">Afipia carboxidovorans (strain ATCC 49405 / DSM 1227 / KCTC 32145 / OM5)</name>
    <name type="common">Oligotropha carboxidovorans</name>
    <dbReference type="NCBI Taxonomy" id="504832"/>
    <lineage>
        <taxon>Bacteria</taxon>
        <taxon>Pseudomonadati</taxon>
        <taxon>Pseudomonadota</taxon>
        <taxon>Alphaproteobacteria</taxon>
        <taxon>Hyphomicrobiales</taxon>
        <taxon>Nitrobacteraceae</taxon>
        <taxon>Afipia</taxon>
    </lineage>
</organism>
<gene>
    <name evidence="1" type="primary">dapA</name>
    <name type="ordered locus">OCAR_5830</name>
    <name type="ordered locus">OCA5_c21860</name>
</gene>
<sequence length="296" mass="31659">MTAKSKFRGSFTALVTPFKNGGLDEAAFRGLVSWQIAEGTHGLVPVGTTGESPTVTHDEHKQLVEWCVDEAKARVPVIAGAGSNSTAEAIGLAKHAEKVGAAAVLVVTPYYNKPTQEGLYQHFKAVNDAIGIPIIIYNIPGRSVVDMSTDTMKRLFELKNISGVKDATANIARVSAQRAAMGEDFNQLSGEDITALGYMAHGGHGCISVTSNVAPRLCSEFQTACLKGDYATALKIQDKLVPLHTNLFIEANPAPVKYALSLLGKMSNTLRLPMVELSEANREIVRQSMVHAGLLN</sequence>